<comment type="function">
    <text evidence="1">Participates actively in the response to hyperosmotic and heat shock by preventing the aggregation of stress-denatured proteins and by disaggregating proteins, also in an autonomous, DnaK-independent fashion. Unfolded proteins bind initially to DnaJ; upon interaction with the DnaJ-bound protein, DnaK hydrolyzes its bound ATP, resulting in the formation of a stable complex. GrpE releases ADP from DnaK; ATP binding to DnaK triggers the release of the substrate protein, thus completing the reaction cycle. Several rounds of ATP-dependent interactions between DnaJ, DnaK and GrpE are required for fully efficient folding. Also involved, together with DnaK and GrpE, in the DNA replication of plasmids through activation of initiation proteins.</text>
</comment>
<comment type="cofactor">
    <cofactor evidence="1">
        <name>Zn(2+)</name>
        <dbReference type="ChEBI" id="CHEBI:29105"/>
    </cofactor>
    <text evidence="1">Binds 2 Zn(2+) ions per monomer.</text>
</comment>
<comment type="subunit">
    <text evidence="1">Homodimer.</text>
</comment>
<comment type="subcellular location">
    <subcellularLocation>
        <location evidence="1">Cytoplasm</location>
    </subcellularLocation>
</comment>
<comment type="domain">
    <text evidence="1">The J domain is necessary and sufficient to stimulate DnaK ATPase activity. Zinc center 1 plays an important role in the autonomous, DnaK-independent chaperone activity of DnaJ. Zinc center 2 is essential for interaction with DnaK and for DnaJ activity.</text>
</comment>
<comment type="similarity">
    <text evidence="1">Belongs to the DnaJ family.</text>
</comment>
<gene>
    <name evidence="1" type="primary">dnaJ</name>
    <name type="ordered locus">LMRG_00925</name>
</gene>
<feature type="chain" id="PRO_0000418521" description="Chaperone protein DnaJ">
    <location>
        <begin position="1"/>
        <end position="377"/>
    </location>
</feature>
<feature type="domain" description="J" evidence="1">
    <location>
        <begin position="5"/>
        <end position="69"/>
    </location>
</feature>
<feature type="repeat" description="CXXCXGXG motif">
    <location>
        <begin position="147"/>
        <end position="154"/>
    </location>
</feature>
<feature type="repeat" description="CXXCXGXG motif">
    <location>
        <begin position="164"/>
        <end position="171"/>
    </location>
</feature>
<feature type="repeat" description="CXXCXGXG motif">
    <location>
        <begin position="190"/>
        <end position="197"/>
    </location>
</feature>
<feature type="repeat" description="CXXCXGXG motif">
    <location>
        <begin position="204"/>
        <end position="211"/>
    </location>
</feature>
<feature type="zinc finger region" description="CR-type" evidence="1">
    <location>
        <begin position="134"/>
        <end position="216"/>
    </location>
</feature>
<feature type="binding site" evidence="1">
    <location>
        <position position="147"/>
    </location>
    <ligand>
        <name>Zn(2+)</name>
        <dbReference type="ChEBI" id="CHEBI:29105"/>
        <label>1</label>
    </ligand>
</feature>
<feature type="binding site" evidence="1">
    <location>
        <position position="150"/>
    </location>
    <ligand>
        <name>Zn(2+)</name>
        <dbReference type="ChEBI" id="CHEBI:29105"/>
        <label>1</label>
    </ligand>
</feature>
<feature type="binding site" evidence="1">
    <location>
        <position position="164"/>
    </location>
    <ligand>
        <name>Zn(2+)</name>
        <dbReference type="ChEBI" id="CHEBI:29105"/>
        <label>2</label>
    </ligand>
</feature>
<feature type="binding site" evidence="1">
    <location>
        <position position="167"/>
    </location>
    <ligand>
        <name>Zn(2+)</name>
        <dbReference type="ChEBI" id="CHEBI:29105"/>
        <label>2</label>
    </ligand>
</feature>
<feature type="binding site" evidence="1">
    <location>
        <position position="190"/>
    </location>
    <ligand>
        <name>Zn(2+)</name>
        <dbReference type="ChEBI" id="CHEBI:29105"/>
        <label>2</label>
    </ligand>
</feature>
<feature type="binding site" evidence="1">
    <location>
        <position position="193"/>
    </location>
    <ligand>
        <name>Zn(2+)</name>
        <dbReference type="ChEBI" id="CHEBI:29105"/>
        <label>2</label>
    </ligand>
</feature>
<feature type="binding site" evidence="1">
    <location>
        <position position="204"/>
    </location>
    <ligand>
        <name>Zn(2+)</name>
        <dbReference type="ChEBI" id="CHEBI:29105"/>
        <label>1</label>
    </ligand>
</feature>
<feature type="binding site" evidence="1">
    <location>
        <position position="207"/>
    </location>
    <ligand>
        <name>Zn(2+)</name>
        <dbReference type="ChEBI" id="CHEBI:29105"/>
        <label>1</label>
    </ligand>
</feature>
<protein>
    <recommendedName>
        <fullName evidence="1">Chaperone protein DnaJ</fullName>
    </recommendedName>
</protein>
<organism>
    <name type="scientific">Listeria monocytogenes serotype 1/2a (strain 10403S)</name>
    <dbReference type="NCBI Taxonomy" id="393133"/>
    <lineage>
        <taxon>Bacteria</taxon>
        <taxon>Bacillati</taxon>
        <taxon>Bacillota</taxon>
        <taxon>Bacilli</taxon>
        <taxon>Bacillales</taxon>
        <taxon>Listeriaceae</taxon>
        <taxon>Listeria</taxon>
    </lineage>
</organism>
<sequence length="377" mass="41077">MAKRDYYEVLGISKSASADEIKKAYRKLSKQYHPDINKEAGADEKFKEISEAYEALSDPQKRAQYDQYGHVDPNQGFGGGGAGGGFGGGGFSGFEDIFDTFFGGGGRQQDPNAPRQGSDLQYTMRLKFKEAIFGKDAEIEIPREENCDTCHGSGAKPGTTPEKCSHCGGKGSINVEQNTPFGRVVNKRTCQYCNGTGKEIKEKCPTCHGKGRVTKTKKIKVKVPAGVNDGQQMRVSGEGEAGINGGPNGDLYVVFVVIPDEFFEREADDIYVEVPITFVQATLGDEIDVPTVHGKVRLKIPSGTQTGTTFRLRGKGVPHLRGNGTGDQHVIVKVIVPKKLDDKQKEILREFASTTGDKVDEQTSGFFDKMKRAFKGD</sequence>
<evidence type="ECO:0000255" key="1">
    <source>
        <dbReference type="HAMAP-Rule" id="MF_01152"/>
    </source>
</evidence>
<dbReference type="EMBL" id="AB023064">
    <property type="protein sequence ID" value="BAA82790.1"/>
    <property type="molecule type" value="Genomic_DNA"/>
</dbReference>
<dbReference type="EMBL" id="CP002002">
    <property type="protein sequence ID" value="AEO06457.1"/>
    <property type="molecule type" value="Genomic_DNA"/>
</dbReference>
<dbReference type="PIR" id="T43739">
    <property type="entry name" value="T43739"/>
</dbReference>
<dbReference type="RefSeq" id="WP_010990134.1">
    <property type="nucleotide sequence ID" value="NC_017544.1"/>
</dbReference>
<dbReference type="SMR" id="G2K045"/>
<dbReference type="KEGG" id="lmt:LMRG_00925"/>
<dbReference type="HOGENOM" id="CLU_017633_0_7_9"/>
<dbReference type="Proteomes" id="UP000001288">
    <property type="component" value="Chromosome"/>
</dbReference>
<dbReference type="GO" id="GO:0005737">
    <property type="term" value="C:cytoplasm"/>
    <property type="evidence" value="ECO:0007669"/>
    <property type="project" value="UniProtKB-SubCell"/>
</dbReference>
<dbReference type="GO" id="GO:0005524">
    <property type="term" value="F:ATP binding"/>
    <property type="evidence" value="ECO:0007669"/>
    <property type="project" value="InterPro"/>
</dbReference>
<dbReference type="GO" id="GO:0031072">
    <property type="term" value="F:heat shock protein binding"/>
    <property type="evidence" value="ECO:0007669"/>
    <property type="project" value="InterPro"/>
</dbReference>
<dbReference type="GO" id="GO:0051082">
    <property type="term" value="F:unfolded protein binding"/>
    <property type="evidence" value="ECO:0007669"/>
    <property type="project" value="UniProtKB-UniRule"/>
</dbReference>
<dbReference type="GO" id="GO:0008270">
    <property type="term" value="F:zinc ion binding"/>
    <property type="evidence" value="ECO:0007669"/>
    <property type="project" value="UniProtKB-UniRule"/>
</dbReference>
<dbReference type="GO" id="GO:0051085">
    <property type="term" value="P:chaperone cofactor-dependent protein refolding"/>
    <property type="evidence" value="ECO:0007669"/>
    <property type="project" value="TreeGrafter"/>
</dbReference>
<dbReference type="GO" id="GO:0006260">
    <property type="term" value="P:DNA replication"/>
    <property type="evidence" value="ECO:0007669"/>
    <property type="project" value="UniProtKB-KW"/>
</dbReference>
<dbReference type="GO" id="GO:0042026">
    <property type="term" value="P:protein refolding"/>
    <property type="evidence" value="ECO:0007669"/>
    <property type="project" value="TreeGrafter"/>
</dbReference>
<dbReference type="GO" id="GO:0009408">
    <property type="term" value="P:response to heat"/>
    <property type="evidence" value="ECO:0007669"/>
    <property type="project" value="InterPro"/>
</dbReference>
<dbReference type="CDD" id="cd06257">
    <property type="entry name" value="DnaJ"/>
    <property type="match status" value="1"/>
</dbReference>
<dbReference type="CDD" id="cd10747">
    <property type="entry name" value="DnaJ_C"/>
    <property type="match status" value="1"/>
</dbReference>
<dbReference type="CDD" id="cd10719">
    <property type="entry name" value="DnaJ_zf"/>
    <property type="match status" value="1"/>
</dbReference>
<dbReference type="FunFam" id="1.10.287.110:FF:000031">
    <property type="entry name" value="Molecular chaperone DnaJ"/>
    <property type="match status" value="1"/>
</dbReference>
<dbReference type="FunFam" id="2.10.230.10:FF:000002">
    <property type="entry name" value="Molecular chaperone DnaJ"/>
    <property type="match status" value="1"/>
</dbReference>
<dbReference type="FunFam" id="2.60.260.20:FF:000004">
    <property type="entry name" value="Molecular chaperone DnaJ"/>
    <property type="match status" value="1"/>
</dbReference>
<dbReference type="FunFam" id="2.60.260.20:FF:000009">
    <property type="entry name" value="Putative Mitochondrial DnaJ chaperone"/>
    <property type="match status" value="1"/>
</dbReference>
<dbReference type="Gene3D" id="6.20.20.10">
    <property type="match status" value="2"/>
</dbReference>
<dbReference type="Gene3D" id="1.10.287.110">
    <property type="entry name" value="DnaJ domain"/>
    <property type="match status" value="1"/>
</dbReference>
<dbReference type="Gene3D" id="2.60.260.20">
    <property type="entry name" value="Urease metallochaperone UreE, N-terminal domain"/>
    <property type="match status" value="2"/>
</dbReference>
<dbReference type="HAMAP" id="MF_01152">
    <property type="entry name" value="DnaJ"/>
    <property type="match status" value="1"/>
</dbReference>
<dbReference type="InterPro" id="IPR012724">
    <property type="entry name" value="DnaJ"/>
</dbReference>
<dbReference type="InterPro" id="IPR002939">
    <property type="entry name" value="DnaJ_C"/>
</dbReference>
<dbReference type="InterPro" id="IPR001623">
    <property type="entry name" value="DnaJ_domain"/>
</dbReference>
<dbReference type="InterPro" id="IPR018253">
    <property type="entry name" value="DnaJ_domain_CS"/>
</dbReference>
<dbReference type="InterPro" id="IPR008971">
    <property type="entry name" value="HSP40/DnaJ_pept-bd"/>
</dbReference>
<dbReference type="InterPro" id="IPR001305">
    <property type="entry name" value="HSP_DnaJ_Cys-rich_dom"/>
</dbReference>
<dbReference type="InterPro" id="IPR036410">
    <property type="entry name" value="HSP_DnaJ_Cys-rich_dom_sf"/>
</dbReference>
<dbReference type="InterPro" id="IPR036869">
    <property type="entry name" value="J_dom_sf"/>
</dbReference>
<dbReference type="NCBIfam" id="TIGR02349">
    <property type="entry name" value="DnaJ_bact"/>
    <property type="match status" value="1"/>
</dbReference>
<dbReference type="NCBIfam" id="NF008035">
    <property type="entry name" value="PRK10767.1"/>
    <property type="match status" value="1"/>
</dbReference>
<dbReference type="NCBIfam" id="NF010869">
    <property type="entry name" value="PRK14276.1"/>
    <property type="match status" value="1"/>
</dbReference>
<dbReference type="NCBIfam" id="NF010873">
    <property type="entry name" value="PRK14280.1"/>
    <property type="match status" value="1"/>
</dbReference>
<dbReference type="PANTHER" id="PTHR43096:SF48">
    <property type="entry name" value="CHAPERONE PROTEIN DNAJ"/>
    <property type="match status" value="1"/>
</dbReference>
<dbReference type="PANTHER" id="PTHR43096">
    <property type="entry name" value="DNAJ HOMOLOG 1, MITOCHONDRIAL-RELATED"/>
    <property type="match status" value="1"/>
</dbReference>
<dbReference type="Pfam" id="PF00226">
    <property type="entry name" value="DnaJ"/>
    <property type="match status" value="1"/>
</dbReference>
<dbReference type="Pfam" id="PF01556">
    <property type="entry name" value="DnaJ_C"/>
    <property type="match status" value="1"/>
</dbReference>
<dbReference type="Pfam" id="PF00684">
    <property type="entry name" value="DnaJ_CXXCXGXG"/>
    <property type="match status" value="1"/>
</dbReference>
<dbReference type="PRINTS" id="PR00625">
    <property type="entry name" value="JDOMAIN"/>
</dbReference>
<dbReference type="SMART" id="SM00271">
    <property type="entry name" value="DnaJ"/>
    <property type="match status" value="1"/>
</dbReference>
<dbReference type="SUPFAM" id="SSF46565">
    <property type="entry name" value="Chaperone J-domain"/>
    <property type="match status" value="1"/>
</dbReference>
<dbReference type="SUPFAM" id="SSF57938">
    <property type="entry name" value="DnaJ/Hsp40 cysteine-rich domain"/>
    <property type="match status" value="1"/>
</dbReference>
<dbReference type="SUPFAM" id="SSF49493">
    <property type="entry name" value="HSP40/DnaJ peptide-binding domain"/>
    <property type="match status" value="2"/>
</dbReference>
<dbReference type="PROSITE" id="PS00636">
    <property type="entry name" value="DNAJ_1"/>
    <property type="match status" value="1"/>
</dbReference>
<dbReference type="PROSITE" id="PS50076">
    <property type="entry name" value="DNAJ_2"/>
    <property type="match status" value="1"/>
</dbReference>
<dbReference type="PROSITE" id="PS51188">
    <property type="entry name" value="ZF_CR"/>
    <property type="match status" value="1"/>
</dbReference>
<name>DNAJ_LISM4</name>
<reference key="1">
    <citation type="journal article" date="2000" name="Cell Stress Chaperones">
        <title>Cloning, sequencing, and transcriptional analysis of the dnaK heat shock operon of Listeria monocytogenes.</title>
        <authorList>
            <person name="Hanawa T."/>
            <person name="Kai M."/>
            <person name="Kamiya S."/>
            <person name="Yamamoto T."/>
        </authorList>
    </citation>
    <scope>NUCLEOTIDE SEQUENCE [GENOMIC DNA]</scope>
    <source>
        <strain>10403S</strain>
    </source>
</reference>
<reference key="2">
    <citation type="submission" date="2010-04" db="EMBL/GenBank/DDBJ databases">
        <title>The genome sequence of Listeria monocytogenes strain 10403S.</title>
        <authorList>
            <consortium name="The Broad Institute Genome Sequencing Platform"/>
            <consortium name="The Broad Institute Genome Sequencing Center for Infectious Disease"/>
            <person name="Borowsky M."/>
            <person name="Borodovsky M."/>
            <person name="Young S.K."/>
            <person name="Zeng Q."/>
            <person name="Koehrsen M."/>
            <person name="Fitzgerald M."/>
            <person name="Wiedmann M."/>
            <person name="Swaminathan B."/>
            <person name="Lauer P."/>
            <person name="Portnoy D."/>
            <person name="Cossart P."/>
            <person name="Buchrieser C."/>
            <person name="Higgins D."/>
            <person name="Abouelleil A."/>
            <person name="Alvarado L."/>
            <person name="Arachchi H.M."/>
            <person name="Berlin A."/>
            <person name="Borenstein D."/>
            <person name="Brown A."/>
            <person name="Chapman S.B."/>
            <person name="Chen Z."/>
            <person name="Dunbar C.D."/>
            <person name="Engels R."/>
            <person name="Freedman E."/>
            <person name="Gearin G."/>
            <person name="Gellesch M."/>
            <person name="Goldberg J."/>
            <person name="Griggs A."/>
            <person name="Gujja S."/>
            <person name="Heilman E."/>
            <person name="Heiman D."/>
            <person name="Howarth C."/>
            <person name="Jen D."/>
            <person name="Larson L."/>
            <person name="Lui A."/>
            <person name="MacDonald J."/>
            <person name="Mehta T."/>
            <person name="Montmayeur A."/>
            <person name="Neiman D."/>
            <person name="Park D."/>
            <person name="Pearson M."/>
            <person name="Priest M."/>
            <person name="Richards J."/>
            <person name="Roberts A."/>
            <person name="Saif S."/>
            <person name="Shea T."/>
            <person name="Shenoy N."/>
            <person name="Sisk P."/>
            <person name="Stolte C."/>
            <person name="Sykes S."/>
            <person name="Walk T."/>
            <person name="White J."/>
            <person name="Yandava C."/>
            <person name="Haas B."/>
            <person name="Nusbaum C."/>
            <person name="Birren B."/>
        </authorList>
    </citation>
    <scope>NUCLEOTIDE SEQUENCE [LARGE SCALE GENOMIC DNA]</scope>
    <source>
        <strain>10403S</strain>
    </source>
</reference>
<proteinExistence type="inferred from homology"/>
<accession>G2K045</accession>
<accession>Q9S5A3</accession>
<keyword id="KW-0143">Chaperone</keyword>
<keyword id="KW-0963">Cytoplasm</keyword>
<keyword id="KW-0235">DNA replication</keyword>
<keyword id="KW-0479">Metal-binding</keyword>
<keyword id="KW-0677">Repeat</keyword>
<keyword id="KW-0346">Stress response</keyword>
<keyword id="KW-0862">Zinc</keyword>
<keyword id="KW-0863">Zinc-finger</keyword>